<organism>
    <name type="scientific">Staphylococcus aureus (strain MRSA252)</name>
    <dbReference type="NCBI Taxonomy" id="282458"/>
    <lineage>
        <taxon>Bacteria</taxon>
        <taxon>Bacillati</taxon>
        <taxon>Bacillota</taxon>
        <taxon>Bacilli</taxon>
        <taxon>Bacillales</taxon>
        <taxon>Staphylococcaceae</taxon>
        <taxon>Staphylococcus</taxon>
    </lineage>
</organism>
<protein>
    <recommendedName>
        <fullName evidence="1">UPF0340 protein SAR2202</fullName>
    </recommendedName>
</protein>
<gene>
    <name type="ordered locus">SAR2202</name>
</gene>
<comment type="similarity">
    <text evidence="1">Belongs to the UPF0340 family.</text>
</comment>
<sequence length="174" mass="18901">MKDLTMLLHELKDMSFFNKGDICLIGCSTSEVIGEKIGTVGSMEVAETIFNALDVVSKETGVTFAFQGCEHINRAITIEKSQFNPLTMEEVSVVPDVHAGGSLATYAFQHMKDPIVVEHITVPCGIDIGQTLIGMHIKHVCVPVRTSVKQVGQAIVTIATSRPKKIGGERAKYQ</sequence>
<reference key="1">
    <citation type="journal article" date="2004" name="Proc. Natl. Acad. Sci. U.S.A.">
        <title>Complete genomes of two clinical Staphylococcus aureus strains: evidence for the rapid evolution of virulence and drug resistance.</title>
        <authorList>
            <person name="Holden M.T.G."/>
            <person name="Feil E.J."/>
            <person name="Lindsay J.A."/>
            <person name="Peacock S.J."/>
            <person name="Day N.P.J."/>
            <person name="Enright M.C."/>
            <person name="Foster T.J."/>
            <person name="Moore C.E."/>
            <person name="Hurst L."/>
            <person name="Atkin R."/>
            <person name="Barron A."/>
            <person name="Bason N."/>
            <person name="Bentley S.D."/>
            <person name="Chillingworth C."/>
            <person name="Chillingworth T."/>
            <person name="Churcher C."/>
            <person name="Clark L."/>
            <person name="Corton C."/>
            <person name="Cronin A."/>
            <person name="Doggett J."/>
            <person name="Dowd L."/>
            <person name="Feltwell T."/>
            <person name="Hance Z."/>
            <person name="Harris B."/>
            <person name="Hauser H."/>
            <person name="Holroyd S."/>
            <person name="Jagels K."/>
            <person name="James K.D."/>
            <person name="Lennard N."/>
            <person name="Line A."/>
            <person name="Mayes R."/>
            <person name="Moule S."/>
            <person name="Mungall K."/>
            <person name="Ormond D."/>
            <person name="Quail M.A."/>
            <person name="Rabbinowitsch E."/>
            <person name="Rutherford K.M."/>
            <person name="Sanders M."/>
            <person name="Sharp S."/>
            <person name="Simmonds M."/>
            <person name="Stevens K."/>
            <person name="Whitehead S."/>
            <person name="Barrell B.G."/>
            <person name="Spratt B.G."/>
            <person name="Parkhill J."/>
        </authorList>
    </citation>
    <scope>NUCLEOTIDE SEQUENCE [LARGE SCALE GENOMIC DNA]</scope>
    <source>
        <strain>MRSA252</strain>
    </source>
</reference>
<name>Y2202_STAAR</name>
<feature type="chain" id="PRO_0000213013" description="UPF0340 protein SAR2202">
    <location>
        <begin position="1"/>
        <end position="174"/>
    </location>
</feature>
<accession>Q6GEW1</accession>
<dbReference type="EMBL" id="BX571856">
    <property type="protein sequence ID" value="CAG41183.1"/>
    <property type="molecule type" value="Genomic_DNA"/>
</dbReference>
<dbReference type="RefSeq" id="WP_000654191.1">
    <property type="nucleotide sequence ID" value="NC_002952.2"/>
</dbReference>
<dbReference type="SMR" id="Q6GEW1"/>
<dbReference type="KEGG" id="sar:SAR2202"/>
<dbReference type="HOGENOM" id="CLU_106658_0_0_9"/>
<dbReference type="Proteomes" id="UP000000596">
    <property type="component" value="Chromosome"/>
</dbReference>
<dbReference type="Gene3D" id="3.40.50.10360">
    <property type="entry name" value="Hypothetical protein TT1679"/>
    <property type="match status" value="1"/>
</dbReference>
<dbReference type="HAMAP" id="MF_00800">
    <property type="entry name" value="UPF0340"/>
    <property type="match status" value="1"/>
</dbReference>
<dbReference type="InterPro" id="IPR028345">
    <property type="entry name" value="Antibiotic_NAT-like"/>
</dbReference>
<dbReference type="InterPro" id="IPR006340">
    <property type="entry name" value="DUF436"/>
</dbReference>
<dbReference type="NCBIfam" id="TIGR01440">
    <property type="entry name" value="TIGR01440 family protein"/>
    <property type="match status" value="1"/>
</dbReference>
<dbReference type="Pfam" id="PF04260">
    <property type="entry name" value="DUF436"/>
    <property type="match status" value="1"/>
</dbReference>
<dbReference type="PIRSF" id="PIRSF007510">
    <property type="entry name" value="UCP007510"/>
    <property type="match status" value="1"/>
</dbReference>
<dbReference type="SUPFAM" id="SSF110710">
    <property type="entry name" value="TTHA0583/YokD-like"/>
    <property type="match status" value="1"/>
</dbReference>
<proteinExistence type="inferred from homology"/>
<evidence type="ECO:0000255" key="1">
    <source>
        <dbReference type="HAMAP-Rule" id="MF_00800"/>
    </source>
</evidence>